<gene>
    <name evidence="4" type="primary">DPB2</name>
    <name evidence="3" type="synonym">CYL2</name>
    <name evidence="6" type="ordered locus">At5g22110</name>
</gene>
<evidence type="ECO:0000250" key="1">
    <source>
        <dbReference type="UniProtKB" id="F4HW04"/>
    </source>
</evidence>
<evidence type="ECO:0000269" key="2">
    <source>
    </source>
</evidence>
<evidence type="ECO:0000303" key="3">
    <source>
    </source>
</evidence>
<evidence type="ECO:0000305" key="4"/>
<evidence type="ECO:0000305" key="5">
    <source>
    </source>
</evidence>
<evidence type="ECO:0000312" key="6">
    <source>
        <dbReference type="Araport" id="AT5G22110"/>
    </source>
</evidence>
<comment type="function">
    <text evidence="1 2">As accessory component of DNA polymerase II participates in chromosomal DNA replication. Required for the timing and determination of cell fate during plant embryogenesis and root pole development, by promoting cell cycle and cell type patterning. Necessary for proper shoot (SAM) and root apical meristem (RAM) functions (By similarity). Is essential to promote the first divisions of the zygote (PubMed:16212602).</text>
</comment>
<comment type="subunit">
    <text evidence="2 5">Subunit of the DNA polymerase II (Probable). Interacts with POL2A (via C-terminus) (PubMed:16212602).</text>
</comment>
<comment type="subcellular location">
    <subcellularLocation>
        <location evidence="4">Nucleus</location>
    </subcellularLocation>
</comment>
<comment type="developmental stage">
    <text evidence="2">During plant development, expressed in the shoot and root meristematic regions, but not inthe meristems in seeds at germination nor in trichomes undergoing endoreduplication. During male gametogenesis, transiently expressed in immature pollen grains at the time of post-meiotic mitosis, but not in the female macrospores at any time of development. Expressed in the embryo sac after fertilization and the in the embryo proper and suspensor cells until the globular stage. At the triangular stage, expressed in the forming shoot apical meristem.</text>
</comment>
<comment type="induction">
    <text evidence="2">Cell cycle regulated. Up-regulated at the G1/S phase transition and then decreases rapidly as cells progress into S-phase.</text>
</comment>
<comment type="disruption phenotype">
    <text evidence="2">Embryonic lethality when homozygous, due to embryo development arrested at one-cell stage.</text>
</comment>
<comment type="similarity">
    <text evidence="4">Belongs to the DNA polymerase epsilon subunit B family.</text>
</comment>
<comment type="sequence caution" evidence="4">
    <conflict type="erroneous gene model prediction">
        <sequence resource="EMBL-CDS" id="CAC34504"/>
    </conflict>
</comment>
<dbReference type="EMBL" id="AL589883">
    <property type="protein sequence ID" value="CAC34504.1"/>
    <property type="status" value="ALT_SEQ"/>
    <property type="molecule type" value="Genomic_DNA"/>
</dbReference>
<dbReference type="EMBL" id="CP002688">
    <property type="protein sequence ID" value="AED92984.1"/>
    <property type="molecule type" value="Genomic_DNA"/>
</dbReference>
<dbReference type="EMBL" id="AK221646">
    <property type="protein sequence ID" value="BAD95306.1"/>
    <property type="molecule type" value="mRNA"/>
</dbReference>
<dbReference type="EMBL" id="BT022108">
    <property type="protein sequence ID" value="AAY34169.1"/>
    <property type="molecule type" value="mRNA"/>
</dbReference>
<dbReference type="RefSeq" id="NP_680197.2">
    <property type="nucleotide sequence ID" value="NM_147892.4"/>
</dbReference>
<dbReference type="SMR" id="Q500V9"/>
<dbReference type="FunCoup" id="Q500V9">
    <property type="interactions" value="2762"/>
</dbReference>
<dbReference type="STRING" id="3702.Q500V9"/>
<dbReference type="PaxDb" id="3702-AT5G22110.1"/>
<dbReference type="ProteomicsDB" id="220297"/>
<dbReference type="EnsemblPlants" id="AT5G22110.1">
    <property type="protein sequence ID" value="AT5G22110.1"/>
    <property type="gene ID" value="AT5G22110"/>
</dbReference>
<dbReference type="GeneID" id="832272"/>
<dbReference type="Gramene" id="AT5G22110.1">
    <property type="protein sequence ID" value="AT5G22110.1"/>
    <property type="gene ID" value="AT5G22110"/>
</dbReference>
<dbReference type="KEGG" id="ath:AT5G22110"/>
<dbReference type="Araport" id="AT5G22110"/>
<dbReference type="TAIR" id="AT5G22110">
    <property type="gene designation" value="DPB2"/>
</dbReference>
<dbReference type="eggNOG" id="KOG3818">
    <property type="taxonomic scope" value="Eukaryota"/>
</dbReference>
<dbReference type="HOGENOM" id="CLU_010628_2_1_1"/>
<dbReference type="InParanoid" id="Q500V9"/>
<dbReference type="OMA" id="FFCEGCF"/>
<dbReference type="PhylomeDB" id="Q500V9"/>
<dbReference type="PRO" id="PR:Q500V9"/>
<dbReference type="Proteomes" id="UP000006548">
    <property type="component" value="Chromosome 5"/>
</dbReference>
<dbReference type="ExpressionAtlas" id="Q500V9">
    <property type="expression patterns" value="baseline and differential"/>
</dbReference>
<dbReference type="GO" id="GO:0008622">
    <property type="term" value="C:epsilon DNA polymerase complex"/>
    <property type="evidence" value="ECO:0000353"/>
    <property type="project" value="TAIR"/>
</dbReference>
<dbReference type="GO" id="GO:0003677">
    <property type="term" value="F:DNA binding"/>
    <property type="evidence" value="ECO:0007669"/>
    <property type="project" value="UniProtKB-KW"/>
</dbReference>
<dbReference type="GO" id="GO:0070182">
    <property type="term" value="F:DNA polymerase binding"/>
    <property type="evidence" value="ECO:0000353"/>
    <property type="project" value="UniProtKB"/>
</dbReference>
<dbReference type="GO" id="GO:0006261">
    <property type="term" value="P:DNA-templated DNA replication"/>
    <property type="evidence" value="ECO:0007669"/>
    <property type="project" value="InterPro"/>
</dbReference>
<dbReference type="GO" id="GO:0009793">
    <property type="term" value="P:embryo development ending in seed dormancy"/>
    <property type="evidence" value="ECO:0000315"/>
    <property type="project" value="UniProtKB"/>
</dbReference>
<dbReference type="GO" id="GO:0051781">
    <property type="term" value="P:positive regulation of cell division"/>
    <property type="evidence" value="ECO:0000315"/>
    <property type="project" value="UniProtKB"/>
</dbReference>
<dbReference type="Gene3D" id="1.10.8.60">
    <property type="match status" value="1"/>
</dbReference>
<dbReference type="InterPro" id="IPR007185">
    <property type="entry name" value="DNA_pol_a/d/e_bsu"/>
</dbReference>
<dbReference type="InterPro" id="IPR016266">
    <property type="entry name" value="POLE2"/>
</dbReference>
<dbReference type="PANTHER" id="PTHR12708:SF0">
    <property type="entry name" value="DNA POLYMERASE EPSILON SUBUNIT 2"/>
    <property type="match status" value="1"/>
</dbReference>
<dbReference type="PANTHER" id="PTHR12708">
    <property type="entry name" value="DNA POLYMERASE EPSILON SUBUNIT B"/>
    <property type="match status" value="1"/>
</dbReference>
<dbReference type="Pfam" id="PF04042">
    <property type="entry name" value="DNA_pol_E_B"/>
    <property type="match status" value="1"/>
</dbReference>
<dbReference type="PIRSF" id="PIRSF000799">
    <property type="entry name" value="DNA_pol_eps_2"/>
    <property type="match status" value="1"/>
</dbReference>
<reference key="1">
    <citation type="journal article" date="2000" name="Nature">
        <title>Sequence and analysis of chromosome 5 of the plant Arabidopsis thaliana.</title>
        <authorList>
            <person name="Tabata S."/>
            <person name="Kaneko T."/>
            <person name="Nakamura Y."/>
            <person name="Kotani H."/>
            <person name="Kato T."/>
            <person name="Asamizu E."/>
            <person name="Miyajima N."/>
            <person name="Sasamoto S."/>
            <person name="Kimura T."/>
            <person name="Hosouchi T."/>
            <person name="Kawashima K."/>
            <person name="Kohara M."/>
            <person name="Matsumoto M."/>
            <person name="Matsuno A."/>
            <person name="Muraki A."/>
            <person name="Nakayama S."/>
            <person name="Nakazaki N."/>
            <person name="Naruo K."/>
            <person name="Okumura S."/>
            <person name="Shinpo S."/>
            <person name="Takeuchi C."/>
            <person name="Wada T."/>
            <person name="Watanabe A."/>
            <person name="Yamada M."/>
            <person name="Yasuda M."/>
            <person name="Sato S."/>
            <person name="de la Bastide M."/>
            <person name="Huang E."/>
            <person name="Spiegel L."/>
            <person name="Gnoj L."/>
            <person name="O'Shaughnessy A."/>
            <person name="Preston R."/>
            <person name="Habermann K."/>
            <person name="Murray J."/>
            <person name="Johnson D."/>
            <person name="Rohlfing T."/>
            <person name="Nelson J."/>
            <person name="Stoneking T."/>
            <person name="Pepin K."/>
            <person name="Spieth J."/>
            <person name="Sekhon M."/>
            <person name="Armstrong J."/>
            <person name="Becker M."/>
            <person name="Belter E."/>
            <person name="Cordum H."/>
            <person name="Cordes M."/>
            <person name="Courtney L."/>
            <person name="Courtney W."/>
            <person name="Dante M."/>
            <person name="Du H."/>
            <person name="Edwards J."/>
            <person name="Fryman J."/>
            <person name="Haakensen B."/>
            <person name="Lamar E."/>
            <person name="Latreille P."/>
            <person name="Leonard S."/>
            <person name="Meyer R."/>
            <person name="Mulvaney E."/>
            <person name="Ozersky P."/>
            <person name="Riley A."/>
            <person name="Strowmatt C."/>
            <person name="Wagner-McPherson C."/>
            <person name="Wollam A."/>
            <person name="Yoakum M."/>
            <person name="Bell M."/>
            <person name="Dedhia N."/>
            <person name="Parnell L."/>
            <person name="Shah R."/>
            <person name="Rodriguez M."/>
            <person name="Hoon See L."/>
            <person name="Vil D."/>
            <person name="Baker J."/>
            <person name="Kirchoff K."/>
            <person name="Toth K."/>
            <person name="King L."/>
            <person name="Bahret A."/>
            <person name="Miller B."/>
            <person name="Marra M.A."/>
            <person name="Martienssen R."/>
            <person name="McCombie W.R."/>
            <person name="Wilson R.K."/>
            <person name="Murphy G."/>
            <person name="Bancroft I."/>
            <person name="Volckaert G."/>
            <person name="Wambutt R."/>
            <person name="Duesterhoeft A."/>
            <person name="Stiekema W."/>
            <person name="Pohl T."/>
            <person name="Entian K.-D."/>
            <person name="Terryn N."/>
            <person name="Hartley N."/>
            <person name="Bent E."/>
            <person name="Johnson S."/>
            <person name="Langham S.-A."/>
            <person name="McCullagh B."/>
            <person name="Robben J."/>
            <person name="Grymonprez B."/>
            <person name="Zimmermann W."/>
            <person name="Ramsperger U."/>
            <person name="Wedler H."/>
            <person name="Balke K."/>
            <person name="Wedler E."/>
            <person name="Peters S."/>
            <person name="van Staveren M."/>
            <person name="Dirkse W."/>
            <person name="Mooijman P."/>
            <person name="Klein Lankhorst R."/>
            <person name="Weitzenegger T."/>
            <person name="Bothe G."/>
            <person name="Rose M."/>
            <person name="Hauf J."/>
            <person name="Berneiser S."/>
            <person name="Hempel S."/>
            <person name="Feldpausch M."/>
            <person name="Lamberth S."/>
            <person name="Villarroel R."/>
            <person name="Gielen J."/>
            <person name="Ardiles W."/>
            <person name="Bents O."/>
            <person name="Lemcke K."/>
            <person name="Kolesov G."/>
            <person name="Mayer K.F.X."/>
            <person name="Rudd S."/>
            <person name="Schoof H."/>
            <person name="Schueller C."/>
            <person name="Zaccaria P."/>
            <person name="Mewes H.-W."/>
            <person name="Bevan M."/>
            <person name="Fransz P.F."/>
        </authorList>
    </citation>
    <scope>NUCLEOTIDE SEQUENCE [LARGE SCALE GENOMIC DNA]</scope>
    <source>
        <strain>cv. Columbia</strain>
    </source>
</reference>
<reference key="2">
    <citation type="journal article" date="2017" name="Plant J.">
        <title>Araport11: a complete reannotation of the Arabidopsis thaliana reference genome.</title>
        <authorList>
            <person name="Cheng C.Y."/>
            <person name="Krishnakumar V."/>
            <person name="Chan A.P."/>
            <person name="Thibaud-Nissen F."/>
            <person name="Schobel S."/>
            <person name="Town C.D."/>
        </authorList>
    </citation>
    <scope>GENOME REANNOTATION</scope>
    <source>
        <strain>cv. Columbia</strain>
    </source>
</reference>
<reference key="3">
    <citation type="submission" date="2005-03" db="EMBL/GenBank/DDBJ databases">
        <title>Large-scale analysis of RIKEN Arabidopsis full-length (RAFL) cDNAs.</title>
        <authorList>
            <person name="Totoki Y."/>
            <person name="Seki M."/>
            <person name="Ishida J."/>
            <person name="Nakajima M."/>
            <person name="Enju A."/>
            <person name="Kamiya A."/>
            <person name="Narusaka M."/>
            <person name="Shin-i T."/>
            <person name="Nakagawa M."/>
            <person name="Sakamoto N."/>
            <person name="Oishi K."/>
            <person name="Kohara Y."/>
            <person name="Kobayashi M."/>
            <person name="Toyoda A."/>
            <person name="Sakaki Y."/>
            <person name="Sakurai T."/>
            <person name="Iida K."/>
            <person name="Akiyama K."/>
            <person name="Satou M."/>
            <person name="Toyoda T."/>
            <person name="Konagaya A."/>
            <person name="Carninci P."/>
            <person name="Kawai J."/>
            <person name="Hayashizaki Y."/>
            <person name="Shinozaki K."/>
        </authorList>
    </citation>
    <scope>NUCLEOTIDE SEQUENCE [LARGE SCALE MRNA]</scope>
    <source>
        <strain>cv. Columbia</strain>
    </source>
</reference>
<reference key="4">
    <citation type="submission" date="2005-05" db="EMBL/GenBank/DDBJ databases">
        <title>Arabidopsis cDNA clones.</title>
        <authorList>
            <person name="Shinn P."/>
            <person name="Chen H."/>
            <person name="Cheuk R.F."/>
            <person name="Kim C.J."/>
            <person name="Ecker J.R."/>
        </authorList>
    </citation>
    <scope>NUCLEOTIDE SEQUENCE [LARGE SCALE MRNA]</scope>
    <source>
        <strain>cv. Columbia</strain>
    </source>
</reference>
<reference key="5">
    <citation type="journal article" date="2005" name="Plant J.">
        <title>Genetic analysis of two Arabidopsis DNA polymerase epsilon subunits during early embryogenesis.</title>
        <authorList>
            <person name="Ronceret A."/>
            <person name="Guilleminot J."/>
            <person name="Lincker F."/>
            <person name="Gadea-Vacas J."/>
            <person name="Delorme V."/>
            <person name="Bechtold N."/>
            <person name="Pelletier G."/>
            <person name="Delseny M."/>
            <person name="Chaboute M.-E."/>
            <person name="Devic M."/>
        </authorList>
    </citation>
    <scope>FUNCTION</scope>
    <scope>INTERACTION WITH POL2A</scope>
    <scope>DEVELOPMENTAL STAGE</scope>
    <scope>INDUCTION BY CELL CYCLE</scope>
    <scope>DISRUPTION PHENOTYPE</scope>
</reference>
<feature type="chain" id="PRO_0000436752" description="DNA polymerase epsilon subunit B">
    <location>
        <begin position="1"/>
        <end position="526"/>
    </location>
</feature>
<feature type="sequence conflict" description="In Ref. 3; BAD95306." evidence="4" ref="3">
    <original>K</original>
    <variation>R</variation>
    <location>
        <position position="110"/>
    </location>
</feature>
<feature type="sequence conflict" description="In Ref. 3; BAD95306." evidence="4" ref="3">
    <original>R</original>
    <variation>Q</variation>
    <location>
        <position position="134"/>
    </location>
</feature>
<protein>
    <recommendedName>
        <fullName>DNA polymerase epsilon subunit B</fullName>
    </recommendedName>
    <alternativeName>
        <fullName evidence="4">DNA polymerase II subunit 2</fullName>
        <shortName evidence="3">AtDPB2</shortName>
    </alternativeName>
    <alternativeName>
        <fullName evidence="3">Protein CYCLOPS 2</fullName>
    </alternativeName>
</protein>
<sequence>MSSTSQKRKKIQKKFKNRGYNLKFDALDEILVFADQFPDDDDGEAIDLLLDNLQETHKSSTVDAESVRGLINRLLGAHNAPEEPTTSASSLAIIDAFLVPKFGYDSVKKKFNEHTSSLPIHGEASAKTALYRERFMLLSQRVSRAEHFSRPAFDAEMSQFENNEISSIQSLISQRGRKWVMGVISQLEDGHFYLEDLSASVEIDLSKAKITTGFFTENTIILAEGEMQVNGIFQVITCGFPPLEDRDKTLKAHSEYDFFGGGTLTKEEMIKLADLERQAVNDTFVILSDIWLDDEEVMRKLETVLDGFESVETVPSLFVFMGNFCSRPCNLSFGSYSSLREQFGKLGRMIGNHPRLKENSRFLFIPGPEDAGPSTVLPRCALPKYLTEELRNIIPNAIFSSNPCRVKFYNQEIVFFRQDLLYRMRRSCLVTPSSEETNDPFKHLVYTITHQSHLCPLPLMVQPIIWNYDHALRLYPTPHTIVLGDKSEQEVCKFGGTTCFNPGSFSTDSTFVAYRPSTQEVELSAL</sequence>
<accession>Q500V9</accession>
<accession>Q56XM7</accession>
<accession>Q9C577</accession>
<keyword id="KW-0131">Cell cycle</keyword>
<keyword id="KW-0235">DNA replication</keyword>
<keyword id="KW-0238">DNA-binding</keyword>
<keyword id="KW-0539">Nucleus</keyword>
<keyword id="KW-1185">Reference proteome</keyword>
<name>DPB2_ARATH</name>
<proteinExistence type="evidence at protein level"/>
<organism>
    <name type="scientific">Arabidopsis thaliana</name>
    <name type="common">Mouse-ear cress</name>
    <dbReference type="NCBI Taxonomy" id="3702"/>
    <lineage>
        <taxon>Eukaryota</taxon>
        <taxon>Viridiplantae</taxon>
        <taxon>Streptophyta</taxon>
        <taxon>Embryophyta</taxon>
        <taxon>Tracheophyta</taxon>
        <taxon>Spermatophyta</taxon>
        <taxon>Magnoliopsida</taxon>
        <taxon>eudicotyledons</taxon>
        <taxon>Gunneridae</taxon>
        <taxon>Pentapetalae</taxon>
        <taxon>rosids</taxon>
        <taxon>malvids</taxon>
        <taxon>Brassicales</taxon>
        <taxon>Brassicaceae</taxon>
        <taxon>Camelineae</taxon>
        <taxon>Arabidopsis</taxon>
    </lineage>
</organism>